<protein>
    <recommendedName>
        <fullName evidence="6">Dermonecrotic toxin LhSicTox-alphaIA2biv</fullName>
        <ecNumber evidence="4">4.6.1.-</ecNumber>
    </recommendedName>
    <alternativeName>
        <fullName>Phospholipase D</fullName>
        <shortName>PLD</shortName>
    </alternativeName>
    <alternativeName>
        <fullName>Sphingomyelin phosphodiesterase D</fullName>
        <shortName>SMD</shortName>
        <shortName>SMase D</shortName>
        <shortName>Sphingomyelinase D</shortName>
    </alternativeName>
</protein>
<dbReference type="EC" id="4.6.1.-" evidence="4"/>
<dbReference type="EMBL" id="FJ171357">
    <property type="protein sequence ID" value="ACN48853.1"/>
    <property type="molecule type" value="mRNA"/>
</dbReference>
<dbReference type="SMR" id="C0JAS2"/>
<dbReference type="GO" id="GO:0005576">
    <property type="term" value="C:extracellular region"/>
    <property type="evidence" value="ECO:0007669"/>
    <property type="project" value="UniProtKB-SubCell"/>
</dbReference>
<dbReference type="GO" id="GO:0016829">
    <property type="term" value="F:lyase activity"/>
    <property type="evidence" value="ECO:0007669"/>
    <property type="project" value="UniProtKB-KW"/>
</dbReference>
<dbReference type="GO" id="GO:0046872">
    <property type="term" value="F:metal ion binding"/>
    <property type="evidence" value="ECO:0007669"/>
    <property type="project" value="UniProtKB-KW"/>
</dbReference>
<dbReference type="GO" id="GO:0008081">
    <property type="term" value="F:phosphoric diester hydrolase activity"/>
    <property type="evidence" value="ECO:0007669"/>
    <property type="project" value="InterPro"/>
</dbReference>
<dbReference type="GO" id="GO:0090729">
    <property type="term" value="F:toxin activity"/>
    <property type="evidence" value="ECO:0007669"/>
    <property type="project" value="UniProtKB-KW"/>
</dbReference>
<dbReference type="GO" id="GO:0031640">
    <property type="term" value="P:killing of cells of another organism"/>
    <property type="evidence" value="ECO:0007669"/>
    <property type="project" value="UniProtKB-KW"/>
</dbReference>
<dbReference type="GO" id="GO:0016042">
    <property type="term" value="P:lipid catabolic process"/>
    <property type="evidence" value="ECO:0007669"/>
    <property type="project" value="UniProtKB-KW"/>
</dbReference>
<dbReference type="CDD" id="cd08576">
    <property type="entry name" value="GDPD_like_SMaseD_PLD"/>
    <property type="match status" value="1"/>
</dbReference>
<dbReference type="Gene3D" id="3.20.20.190">
    <property type="entry name" value="Phosphatidylinositol (PI) phosphodiesterase"/>
    <property type="match status" value="1"/>
</dbReference>
<dbReference type="InterPro" id="IPR017946">
    <property type="entry name" value="PLC-like_Pdiesterase_TIM-brl"/>
</dbReference>
<dbReference type="Pfam" id="PF13653">
    <property type="entry name" value="GDPD_2"/>
    <property type="match status" value="1"/>
</dbReference>
<dbReference type="SUPFAM" id="SSF51695">
    <property type="entry name" value="PLC-like phosphodiesterases"/>
    <property type="match status" value="1"/>
</dbReference>
<reference key="1">
    <citation type="journal article" date="2009" name="Mol. Biol. Evol.">
        <title>Molecular evolution, functional variation, and proposed nomenclature of the gene family that includes sphingomyelinase D in sicariid spider venoms.</title>
        <authorList>
            <person name="Binford G.J."/>
            <person name="Bodner M.R."/>
            <person name="Cordes M.H."/>
            <person name="Baldwin K.L."/>
            <person name="Rynerson M.R."/>
            <person name="Burns S.N."/>
            <person name="Zobel-Thropp P.A."/>
        </authorList>
    </citation>
    <scope>NUCLEOTIDE SEQUENCE [MRNA]</scope>
    <scope>NOMENCLATURE</scope>
    <source>
        <tissue>Venom gland</tissue>
    </source>
</reference>
<proteinExistence type="evidence at transcript level"/>
<comment type="function">
    <text evidence="1 3">Dermonecrotic toxins cleave the phosphodiester linkage between the phosphate and headgroup of certain phospholipids (sphingolipid and lysolipid substrates), forming an alcohol (often choline) and a cyclic phosphate (By similarity). This toxin acts on sphingomyelin (SM) (By similarity). It may also act on ceramide phosphoethanolamine (CPE), lysophosphatidylcholine (LPC) and lysophosphatidylethanolamine (LPE), but not on lysophosphatidylserine (LPS), and lysophosphatidylglycerol (LPG) (By similarity). It acts by transphosphatidylation, releasing exclusively cyclic phosphate products as second products (By similarity). Induces dermonecrosis, hemolysis, increased vascular permeability, edema, inflammatory response, and platelet aggregation (By similarity).</text>
</comment>
<comment type="catalytic activity">
    <reaction evidence="1">
        <text>an N-(acyl)-sphingosylphosphocholine = an N-(acyl)-sphingosyl-1,3-cyclic phosphate + choline</text>
        <dbReference type="Rhea" id="RHEA:60652"/>
        <dbReference type="ChEBI" id="CHEBI:15354"/>
        <dbReference type="ChEBI" id="CHEBI:64583"/>
        <dbReference type="ChEBI" id="CHEBI:143892"/>
    </reaction>
</comment>
<comment type="catalytic activity">
    <reaction evidence="1">
        <text>an N-(acyl)-sphingosylphosphoethanolamine = an N-(acyl)-sphingosyl-1,3-cyclic phosphate + ethanolamine</text>
        <dbReference type="Rhea" id="RHEA:60648"/>
        <dbReference type="ChEBI" id="CHEBI:57603"/>
        <dbReference type="ChEBI" id="CHEBI:143891"/>
        <dbReference type="ChEBI" id="CHEBI:143892"/>
    </reaction>
</comment>
<comment type="catalytic activity">
    <reaction evidence="1">
        <text>a 1-acyl-sn-glycero-3-phosphocholine = a 1-acyl-sn-glycero-2,3-cyclic phosphate + choline</text>
        <dbReference type="Rhea" id="RHEA:60700"/>
        <dbReference type="ChEBI" id="CHEBI:15354"/>
        <dbReference type="ChEBI" id="CHEBI:58168"/>
        <dbReference type="ChEBI" id="CHEBI:143947"/>
    </reaction>
</comment>
<comment type="catalytic activity">
    <reaction evidence="1">
        <text>a 1-acyl-sn-glycero-3-phosphoethanolamine = a 1-acyl-sn-glycero-2,3-cyclic phosphate + ethanolamine</text>
        <dbReference type="Rhea" id="RHEA:60704"/>
        <dbReference type="ChEBI" id="CHEBI:57603"/>
        <dbReference type="ChEBI" id="CHEBI:64381"/>
        <dbReference type="ChEBI" id="CHEBI:143947"/>
    </reaction>
</comment>
<comment type="cofactor">
    <cofactor evidence="5">
        <name>Mg(2+)</name>
        <dbReference type="ChEBI" id="CHEBI:18420"/>
    </cofactor>
    <text evidence="5">Binds 1 Mg(2+) ion per subunit.</text>
</comment>
<comment type="subcellular location">
    <subcellularLocation>
        <location evidence="8">Secreted</location>
    </subcellularLocation>
</comment>
<comment type="tissue specificity">
    <text evidence="8">Expressed by the venom gland.</text>
</comment>
<comment type="similarity">
    <text evidence="7">Belongs to the arthropod phospholipase D family. Class II subfamily.</text>
</comment>
<comment type="caution">
    <text evidence="1 2 4">The most common activity assay for dermonecrotic toxins detects enzymatic activity by monitoring choline release from substrate. Liberation of choline from sphingomyelin (SM) or lysophosphatidylcholine (LPC) is commonly assumed to result from substrate hydrolysis, giving either ceramide-1-phosphate (C1P) or lysophosphatidic acid (LPA), respectively, as a second product. However, two studies from Lajoie and colleagues (2013 and 2015) report the observation of exclusive formation of cyclic phosphate products as second products, resulting from intramolecular transphosphatidylation. Cyclic phosphates have vastly different biological properties from their monoester counterparts, and they may be relevant to the pathology of brown spider envenomation.</text>
</comment>
<organism>
    <name type="scientific">Loxosceles hirsuta</name>
    <name type="common">Recluse spider</name>
    <dbReference type="NCBI Taxonomy" id="571525"/>
    <lineage>
        <taxon>Eukaryota</taxon>
        <taxon>Metazoa</taxon>
        <taxon>Ecdysozoa</taxon>
        <taxon>Arthropoda</taxon>
        <taxon>Chelicerata</taxon>
        <taxon>Arachnida</taxon>
        <taxon>Araneae</taxon>
        <taxon>Araneomorphae</taxon>
        <taxon>Haplogynae</taxon>
        <taxon>Scytodoidea</taxon>
        <taxon>Sicariidae</taxon>
        <taxon>Loxosceles</taxon>
    </lineage>
</organism>
<name>A1IB4_LOXHI</name>
<evidence type="ECO:0000250" key="1">
    <source>
        <dbReference type="UniProtKB" id="A0A0D4WTV1"/>
    </source>
</evidence>
<evidence type="ECO:0000250" key="2">
    <source>
        <dbReference type="UniProtKB" id="A0A0D4WV12"/>
    </source>
</evidence>
<evidence type="ECO:0000250" key="3">
    <source>
        <dbReference type="UniProtKB" id="P0CE80"/>
    </source>
</evidence>
<evidence type="ECO:0000250" key="4">
    <source>
        <dbReference type="UniProtKB" id="Q4ZFU2"/>
    </source>
</evidence>
<evidence type="ECO:0000250" key="5">
    <source>
        <dbReference type="UniProtKB" id="Q8I914"/>
    </source>
</evidence>
<evidence type="ECO:0000303" key="6">
    <source>
    </source>
</evidence>
<evidence type="ECO:0000305" key="7"/>
<evidence type="ECO:0000305" key="8">
    <source>
    </source>
</evidence>
<accession>C0JAS2</accession>
<keyword id="KW-0204">Cytolysis</keyword>
<keyword id="KW-1061">Dermonecrotic toxin</keyword>
<keyword id="KW-1015">Disulfide bond</keyword>
<keyword id="KW-0354">Hemolysis</keyword>
<keyword id="KW-0442">Lipid degradation</keyword>
<keyword id="KW-0443">Lipid metabolism</keyword>
<keyword id="KW-0456">Lyase</keyword>
<keyword id="KW-0460">Magnesium</keyword>
<keyword id="KW-0479">Metal-binding</keyword>
<keyword id="KW-0964">Secreted</keyword>
<keyword id="KW-0800">Toxin</keyword>
<feature type="chain" id="PRO_0000392760" description="Dermonecrotic toxin LhSicTox-alphaIA2biv">
    <location>
        <begin position="1" status="less than"/>
        <end position="273"/>
    </location>
</feature>
<feature type="active site" evidence="5">
    <location>
        <position position="5"/>
    </location>
</feature>
<feature type="active site" description="Nucleophile" evidence="5">
    <location>
        <position position="41"/>
    </location>
</feature>
<feature type="binding site" evidence="5">
    <location>
        <position position="25"/>
    </location>
    <ligand>
        <name>Mg(2+)</name>
        <dbReference type="ChEBI" id="CHEBI:18420"/>
    </ligand>
</feature>
<feature type="binding site" evidence="5">
    <location>
        <position position="27"/>
    </location>
    <ligand>
        <name>Mg(2+)</name>
        <dbReference type="ChEBI" id="CHEBI:18420"/>
    </ligand>
</feature>
<feature type="binding site" evidence="5">
    <location>
        <position position="85"/>
    </location>
    <ligand>
        <name>Mg(2+)</name>
        <dbReference type="ChEBI" id="CHEBI:18420"/>
    </ligand>
</feature>
<feature type="disulfide bond" evidence="3">
    <location>
        <begin position="45"/>
        <end position="51"/>
    </location>
</feature>
<feature type="disulfide bond" evidence="3">
    <location>
        <begin position="47"/>
        <end position="190"/>
    </location>
</feature>
<feature type="non-terminal residue">
    <location>
        <position position="1"/>
    </location>
</feature>
<sequence>WIMGHMVNAIYQIDEFVNLGANSIETDVSFDDNANPEYTYHGIPCDCGRSCLKWENYNDFLKGLRSATTPGNSKYQSKLILVVFDLKTGSLYDNQASEAGKKLAKNLLKHYWNNGNNGGRAYIVLSIPDLNHYPLIKGFTDTLKQEGHPELLEKVGYDFSGNDAIGDVAKAYKKAGVSGHVWQSDGITNCLLRGLSRVKDAVANRDSGKGYINKVYYWTVDKRATTRDALDAGVDGVMTNYPDVIADVMNEAAYKNKVRLATYEDSPWVTFRK</sequence>